<proteinExistence type="inferred from homology"/>
<name>CUTC_PORGI</name>
<organism>
    <name type="scientific">Porphyromonas gingivalis (strain ATCC BAA-308 / W83)</name>
    <dbReference type="NCBI Taxonomy" id="242619"/>
    <lineage>
        <taxon>Bacteria</taxon>
        <taxon>Pseudomonadati</taxon>
        <taxon>Bacteroidota</taxon>
        <taxon>Bacteroidia</taxon>
        <taxon>Bacteroidales</taxon>
        <taxon>Porphyromonadaceae</taxon>
        <taxon>Porphyromonas</taxon>
    </lineage>
</organism>
<accession>Q7MWB6</accession>
<feature type="chain" id="PRO_0000215071" description="PF03932 family protein CutC">
    <location>
        <begin position="1"/>
        <end position="248"/>
    </location>
</feature>
<evidence type="ECO:0000255" key="1">
    <source>
        <dbReference type="HAMAP-Rule" id="MF_00795"/>
    </source>
</evidence>
<comment type="subcellular location">
    <subcellularLocation>
        <location evidence="1">Cytoplasm</location>
    </subcellularLocation>
</comment>
<comment type="similarity">
    <text evidence="1">Belongs to the CutC family.</text>
</comment>
<comment type="caution">
    <text evidence="1">Once thought to be involved in copper homeostasis, experiments in E.coli have shown this is not the case.</text>
</comment>
<gene>
    <name evidence="1" type="primary">cutC</name>
    <name type="ordered locus">PG_0714</name>
</gene>
<reference key="1">
    <citation type="journal article" date="2003" name="J. Bacteriol.">
        <title>Complete genome sequence of the oral pathogenic bacterium Porphyromonas gingivalis strain W83.</title>
        <authorList>
            <person name="Nelson K.E."/>
            <person name="Fleischmann R.D."/>
            <person name="DeBoy R.T."/>
            <person name="Paulsen I.T."/>
            <person name="Fouts D.E."/>
            <person name="Eisen J.A."/>
            <person name="Daugherty S.C."/>
            <person name="Dodson R.J."/>
            <person name="Durkin A.S."/>
            <person name="Gwinn M.L."/>
            <person name="Haft D.H."/>
            <person name="Kolonay J.F."/>
            <person name="Nelson W.C."/>
            <person name="Mason T.M."/>
            <person name="Tallon L."/>
            <person name="Gray J."/>
            <person name="Granger D."/>
            <person name="Tettelin H."/>
            <person name="Dong H."/>
            <person name="Galvin J.L."/>
            <person name="Duncan M.J."/>
            <person name="Dewhirst F.E."/>
            <person name="Fraser C.M."/>
        </authorList>
    </citation>
    <scope>NUCLEOTIDE SEQUENCE [LARGE SCALE GENOMIC DNA]</scope>
    <source>
        <strain>ATCC BAA-308 / W83</strain>
    </source>
</reference>
<sequence length="248" mass="26619">MAMQLEICANSAASCRQAELGGATRVELCAGIPEGGTTPSAGEMAVARSLIAIPIHVIIRPRAGDFVYSSEEIEAMCYDIRVVRSLGMEGVVFGCLTPEGGYDEEANSRLLKEAQGMQLTFHRAFDVCAAPFEMLEKLIAAGFHRVLTSGCAPTALEGKDMIGALNKQATGRIGIMAGCGIRLGNIETLARHTGITQFHSSLRHDIPSSMRFRRPEVSMGGTVKIDEYSRPETSADMVRQAVDILQGI</sequence>
<keyword id="KW-0963">Cytoplasm</keyword>
<keyword id="KW-1185">Reference proteome</keyword>
<protein>
    <recommendedName>
        <fullName evidence="1">PF03932 family protein CutC</fullName>
    </recommendedName>
</protein>
<dbReference type="EMBL" id="AE015924">
    <property type="protein sequence ID" value="AAQ65885.1"/>
    <property type="molecule type" value="Genomic_DNA"/>
</dbReference>
<dbReference type="RefSeq" id="WP_010956109.1">
    <property type="nucleotide sequence ID" value="NC_002950.2"/>
</dbReference>
<dbReference type="SMR" id="Q7MWB6"/>
<dbReference type="STRING" id="242619.PG_0714"/>
<dbReference type="EnsemblBacteria" id="AAQ65885">
    <property type="protein sequence ID" value="AAQ65885"/>
    <property type="gene ID" value="PG_0714"/>
</dbReference>
<dbReference type="KEGG" id="pgi:PG_0714"/>
<dbReference type="PATRIC" id="fig|242619.8.peg.655"/>
<dbReference type="eggNOG" id="COG3142">
    <property type="taxonomic scope" value="Bacteria"/>
</dbReference>
<dbReference type="HOGENOM" id="CLU_050555_3_2_10"/>
<dbReference type="BioCyc" id="PGIN242619:G1G02-658-MONOMER"/>
<dbReference type="Proteomes" id="UP000000588">
    <property type="component" value="Chromosome"/>
</dbReference>
<dbReference type="GO" id="GO:0005737">
    <property type="term" value="C:cytoplasm"/>
    <property type="evidence" value="ECO:0007669"/>
    <property type="project" value="UniProtKB-SubCell"/>
</dbReference>
<dbReference type="GO" id="GO:0005507">
    <property type="term" value="F:copper ion binding"/>
    <property type="evidence" value="ECO:0007669"/>
    <property type="project" value="TreeGrafter"/>
</dbReference>
<dbReference type="FunFam" id="3.20.20.380:FF:000001">
    <property type="entry name" value="Copper homeostasis protein CutC"/>
    <property type="match status" value="1"/>
</dbReference>
<dbReference type="Gene3D" id="3.20.20.380">
    <property type="entry name" value="Copper homeostasis (CutC) domain"/>
    <property type="match status" value="1"/>
</dbReference>
<dbReference type="HAMAP" id="MF_00795">
    <property type="entry name" value="CutC"/>
    <property type="match status" value="1"/>
</dbReference>
<dbReference type="InterPro" id="IPR005627">
    <property type="entry name" value="CutC-like"/>
</dbReference>
<dbReference type="InterPro" id="IPR036822">
    <property type="entry name" value="CutC-like_dom_sf"/>
</dbReference>
<dbReference type="PANTHER" id="PTHR12598">
    <property type="entry name" value="COPPER HOMEOSTASIS PROTEIN CUTC"/>
    <property type="match status" value="1"/>
</dbReference>
<dbReference type="PANTHER" id="PTHR12598:SF0">
    <property type="entry name" value="COPPER HOMEOSTASIS PROTEIN CUTC HOMOLOG"/>
    <property type="match status" value="1"/>
</dbReference>
<dbReference type="Pfam" id="PF03932">
    <property type="entry name" value="CutC"/>
    <property type="match status" value="1"/>
</dbReference>
<dbReference type="SUPFAM" id="SSF110395">
    <property type="entry name" value="CutC-like"/>
    <property type="match status" value="1"/>
</dbReference>